<organism>
    <name type="scientific">Staphylococcus haemolyticus (strain JCSC1435)</name>
    <dbReference type="NCBI Taxonomy" id="279808"/>
    <lineage>
        <taxon>Bacteria</taxon>
        <taxon>Bacillati</taxon>
        <taxon>Bacillota</taxon>
        <taxon>Bacilli</taxon>
        <taxon>Bacillales</taxon>
        <taxon>Staphylococcaceae</taxon>
        <taxon>Staphylococcus</taxon>
    </lineage>
</organism>
<comment type="function">
    <text evidence="1">Part of the ABC transporter complex hrt involved in hemin import. Responsible for the translocation of the substrate across the membrane (By similarity).</text>
</comment>
<comment type="subunit">
    <text evidence="1">The complex is composed of two ATP-binding proteins (HrtA), two transmembrane proteins (HrtB) and a solute-binding protein.</text>
</comment>
<comment type="subcellular location">
    <subcellularLocation>
        <location evidence="3">Cell membrane</location>
        <topology evidence="3">Multi-pass membrane protein</topology>
    </subcellularLocation>
</comment>
<comment type="similarity">
    <text evidence="3">Belongs to the ABC-4 integral membrane protein family. HrtB subfamily.</text>
</comment>
<keyword id="KW-1003">Cell membrane</keyword>
<keyword id="KW-0472">Membrane</keyword>
<keyword id="KW-0812">Transmembrane</keyword>
<keyword id="KW-1133">Transmembrane helix</keyword>
<keyword id="KW-0813">Transport</keyword>
<protein>
    <recommendedName>
        <fullName>Putative hemin transport system permease protein HrtB</fullName>
    </recommendedName>
</protein>
<dbReference type="EMBL" id="AP006716">
    <property type="protein sequence ID" value="BAE04007.1"/>
    <property type="molecule type" value="Genomic_DNA"/>
</dbReference>
<dbReference type="RefSeq" id="WP_011275023.1">
    <property type="nucleotide sequence ID" value="NC_007168.1"/>
</dbReference>
<dbReference type="SMR" id="Q4L8L8"/>
<dbReference type="KEGG" id="sha:SH0698"/>
<dbReference type="eggNOG" id="COG0577">
    <property type="taxonomic scope" value="Bacteria"/>
</dbReference>
<dbReference type="HOGENOM" id="CLU_060907_1_0_9"/>
<dbReference type="OrthoDB" id="384327at2"/>
<dbReference type="Proteomes" id="UP000000543">
    <property type="component" value="Chromosome"/>
</dbReference>
<dbReference type="GO" id="GO:0005886">
    <property type="term" value="C:plasma membrane"/>
    <property type="evidence" value="ECO:0007669"/>
    <property type="project" value="UniProtKB-SubCell"/>
</dbReference>
<dbReference type="InterPro" id="IPR051125">
    <property type="entry name" value="ABC-4/HrtB_transporter"/>
</dbReference>
<dbReference type="InterPro" id="IPR003838">
    <property type="entry name" value="ABC3_permease_C"/>
</dbReference>
<dbReference type="PANTHER" id="PTHR43738">
    <property type="entry name" value="ABC TRANSPORTER, MEMBRANE PROTEIN"/>
    <property type="match status" value="1"/>
</dbReference>
<dbReference type="PANTHER" id="PTHR43738:SF1">
    <property type="entry name" value="HEMIN TRANSPORT SYSTEM PERMEASE PROTEIN HRTB-RELATED"/>
    <property type="match status" value="1"/>
</dbReference>
<dbReference type="Pfam" id="PF02687">
    <property type="entry name" value="FtsX"/>
    <property type="match status" value="1"/>
</dbReference>
<reference key="1">
    <citation type="journal article" date="2005" name="J. Bacteriol.">
        <title>Whole-genome sequencing of Staphylococcus haemolyticus uncovers the extreme plasticity of its genome and the evolution of human-colonizing staphylococcal species.</title>
        <authorList>
            <person name="Takeuchi F."/>
            <person name="Watanabe S."/>
            <person name="Baba T."/>
            <person name="Yuzawa H."/>
            <person name="Ito T."/>
            <person name="Morimoto Y."/>
            <person name="Kuroda M."/>
            <person name="Cui L."/>
            <person name="Takahashi M."/>
            <person name="Ankai A."/>
            <person name="Baba S."/>
            <person name="Fukui S."/>
            <person name="Lee J.C."/>
            <person name="Hiramatsu K."/>
        </authorList>
    </citation>
    <scope>NUCLEOTIDE SEQUENCE [LARGE SCALE GENOMIC DNA]</scope>
    <source>
        <strain>JCSC1435</strain>
    </source>
</reference>
<proteinExistence type="inferred from homology"/>
<sequence>MNLAWKEIKFYRFRYTLIMLIIFLLGSMVLFISGLAQGLARENISYLNNMPAEHYIVEDNKEPKLESSQLNQSQQNKIEKIIHENATQMGTQTLKINQQDQDVITLNTPKHLTPKLVSGNYPKKQNEIAISEKLTGNDLKVGDTVTFKGHHHNYKISGIMNESMYSHSSMILMNKEAFKSLNKQVSTFYPVDKINKDNKESLKQIKGIKVVNEKALTDNIASYQAEQMPLNLMIISLFVITAIVLSAFFYVMTIQKIPQIGILKAIGIKTKHLLTALLLQIILTTMVGVILAFSVILILNAFMPVTMPFYLSYSQVLLMIVVFLIVGLIGALLSFIKVLKVDPIEAIGGME</sequence>
<gene>
    <name type="primary">hrtB</name>
    <name type="ordered locus">SH0698</name>
</gene>
<evidence type="ECO:0000250" key="1"/>
<evidence type="ECO:0000255" key="2"/>
<evidence type="ECO:0000305" key="3"/>
<feature type="chain" id="PRO_0000270531" description="Putative hemin transport system permease protein HrtB">
    <location>
        <begin position="1"/>
        <end position="351"/>
    </location>
</feature>
<feature type="transmembrane region" description="Helical" evidence="2">
    <location>
        <begin position="16"/>
        <end position="36"/>
    </location>
</feature>
<feature type="transmembrane region" description="Helical" evidence="2">
    <location>
        <begin position="232"/>
        <end position="252"/>
    </location>
</feature>
<feature type="transmembrane region" description="Helical" evidence="2">
    <location>
        <begin position="278"/>
        <end position="298"/>
    </location>
</feature>
<feature type="transmembrane region" description="Helical" evidence="2">
    <location>
        <begin position="316"/>
        <end position="336"/>
    </location>
</feature>
<accession>Q4L8L8</accession>
<name>HRTB_STAHJ</name>